<comment type="subunit">
    <text evidence="3">Interacts with YIP1 and the Rab GTPases SEC4, YPT1, YPT6, YPT10, YPT11, YPT31, YPT32 and YPT52.</text>
</comment>
<comment type="interaction">
    <interactant intactId="EBI-25301">
        <id>P53633</id>
    </interactant>
    <interactant intactId="EBI-16858">
        <id>P07560</id>
        <label>SEC4</label>
    </interactant>
    <organismsDiffer>false</organismsDiffer>
    <experiments>2</experiments>
</comment>
<comment type="interaction">
    <interactant intactId="EBI-25301">
        <id>P53633</id>
    </interactant>
    <interactant intactId="EBI-29496">
        <id>P01123</id>
        <label>YPT1</label>
    </interactant>
    <organismsDiffer>false</organismsDiffer>
    <experiments>2</experiments>
</comment>
<comment type="interaction">
    <interactant intactId="EBI-25301">
        <id>P53633</id>
    </interactant>
    <interactant intactId="EBI-29357">
        <id>P38146</id>
        <label>YPT10</label>
    </interactant>
    <organismsDiffer>false</organismsDiffer>
    <experiments>2</experiments>
</comment>
<comment type="interaction">
    <interactant intactId="EBI-25301">
        <id>P53633</id>
    </interactant>
    <interactant intactId="EBI-29362">
        <id>P48559</id>
        <label>YPT11</label>
    </interactant>
    <organismsDiffer>false</organismsDiffer>
    <experiments>2</experiments>
</comment>
<comment type="interaction">
    <interactant intactId="EBI-25301">
        <id>P53633</id>
    </interactant>
    <interactant intactId="EBI-29379">
        <id>P38555</id>
        <label>YPT31</label>
    </interactant>
    <organismsDiffer>false</organismsDiffer>
    <experiments>3</experiments>
</comment>
<comment type="interaction">
    <interactant intactId="EBI-25301">
        <id>P53633</id>
    </interactant>
    <interactant intactId="EBI-29384">
        <id>P51996</id>
        <label>YPT32</label>
    </interactant>
    <organismsDiffer>false</organismsDiffer>
    <experiments>2</experiments>
</comment>
<comment type="interaction">
    <interactant intactId="EBI-25301">
        <id>P53633</id>
    </interactant>
    <interactant intactId="EBI-29407">
        <id>P36018</id>
        <label>YPT52</label>
    </interactant>
    <organismsDiffer>false</organismsDiffer>
    <experiments>2</experiments>
</comment>
<comment type="interaction">
    <interactant intactId="EBI-25301">
        <id>P53633</id>
    </interactant>
    <interactant intactId="EBI-29503">
        <id>Q99260</id>
        <label>YPT6</label>
    </interactant>
    <organismsDiffer>false</organismsDiffer>
    <experiments>2</experiments>
</comment>
<comment type="subcellular location">
    <subcellularLocation>
        <location evidence="4">Golgi apparatus membrane</location>
        <topology evidence="4">Multi-pass membrane protein</topology>
    </subcellularLocation>
    <subcellularLocation>
        <location evidence="8">Peroxisome membrane</location>
        <topology evidence="2">Multi-pass membrane protein</topology>
    </subcellularLocation>
    <text evidence="6">Peroxisomal localization is dependent on PEX5.</text>
</comment>
<comment type="alternative products">
    <event type="alternative splicing"/>
    <isoform>
        <id>P53633-1</id>
        <name>1</name>
        <name>YIP3 long</name>
        <name evidence="8">YIP3L</name>
        <sequence type="displayed"/>
    </isoform>
    <isoform>
        <id>P53633-2</id>
        <name>2</name>
        <name>YIP3 short</name>
        <name evidence="8">YIP3S</name>
        <sequence type="described" ref="VSP_061751"/>
    </isoform>
</comment>
<comment type="miscellaneous">
    <text evidence="5">Present with 5500 molecules/cell in log phase SD medium.</text>
</comment>
<comment type="similarity">
    <text evidence="7">Belongs to the PRA1 family.</text>
</comment>
<comment type="sequence caution" evidence="7">
    <conflict type="erroneous gene model prediction">
        <sequence resource="EMBL-CDS" id="CAA64238"/>
    </conflict>
</comment>
<reference key="1">
    <citation type="submission" date="1996-04" db="EMBL/GenBank/DDBJ databases">
        <authorList>
            <person name="Matern H.T."/>
            <person name="Gallwitz D."/>
        </authorList>
    </citation>
    <scope>NUCLEOTIDE SEQUENCE [GENOMIC DNA / MRNA]</scope>
</reference>
<reference key="2">
    <citation type="journal article" date="1996" name="Yeast">
        <title>The sequence of 12.8 kb from the left arm of chromosome XIV reveals a sigma element, a pro-tRNA and six complete open reading frames, one of which encodes a protein similar to the human leukotriene A4 hydrolase.</title>
        <authorList>
            <person name="Nasr F."/>
            <person name="Becam A.-M."/>
            <person name="Herbert C.J."/>
        </authorList>
    </citation>
    <scope>NUCLEOTIDE SEQUENCE [GENOMIC DNA]</scope>
    <source>
        <strain>ATCC 96604 / S288c / FY1679</strain>
    </source>
</reference>
<reference key="3">
    <citation type="journal article" date="1997" name="Nature">
        <title>The nucleotide sequence of Saccharomyces cerevisiae chromosome XIV and its evolutionary implications.</title>
        <authorList>
            <person name="Philippsen P."/>
            <person name="Kleine K."/>
            <person name="Poehlmann R."/>
            <person name="Duesterhoeft A."/>
            <person name="Hamberg K."/>
            <person name="Hegemann J.H."/>
            <person name="Obermaier B."/>
            <person name="Urrestarazu L.A."/>
            <person name="Aert R."/>
            <person name="Albermann K."/>
            <person name="Altmann R."/>
            <person name="Andre B."/>
            <person name="Baladron V."/>
            <person name="Ballesta J.P.G."/>
            <person name="Becam A.-M."/>
            <person name="Beinhauer J.D."/>
            <person name="Boskovic J."/>
            <person name="Buitrago M.J."/>
            <person name="Bussereau F."/>
            <person name="Coster F."/>
            <person name="Crouzet M."/>
            <person name="D'Angelo M."/>
            <person name="Dal Pero F."/>
            <person name="De Antoni A."/>
            <person name="del Rey F."/>
            <person name="Doignon F."/>
            <person name="Domdey H."/>
            <person name="Dubois E."/>
            <person name="Fiedler T.A."/>
            <person name="Fleig U."/>
            <person name="Floeth M."/>
            <person name="Fritz C."/>
            <person name="Gaillardin C."/>
            <person name="Garcia-Cantalejo J.M."/>
            <person name="Glansdorff N."/>
            <person name="Goffeau A."/>
            <person name="Gueldener U."/>
            <person name="Herbert C.J."/>
            <person name="Heumann K."/>
            <person name="Heuss-Neitzel D."/>
            <person name="Hilbert H."/>
            <person name="Hinni K."/>
            <person name="Iraqui Houssaini I."/>
            <person name="Jacquet M."/>
            <person name="Jimenez A."/>
            <person name="Jonniaux J.-L."/>
            <person name="Karpfinger-Hartl L."/>
            <person name="Lanfranchi G."/>
            <person name="Lepingle A."/>
            <person name="Levesque H."/>
            <person name="Lyck R."/>
            <person name="Maftahi M."/>
            <person name="Mallet L."/>
            <person name="Maurer C.T.C."/>
            <person name="Messenguy F."/>
            <person name="Mewes H.-W."/>
            <person name="Moestl D."/>
            <person name="Nasr F."/>
            <person name="Nicaud J.-M."/>
            <person name="Niedenthal R.K."/>
            <person name="Pandolfo D."/>
            <person name="Pierard A."/>
            <person name="Piravandi E."/>
            <person name="Planta R.J."/>
            <person name="Pohl T.M."/>
            <person name="Purnelle B."/>
            <person name="Rebischung C."/>
            <person name="Remacha M.A."/>
            <person name="Revuelta J.L."/>
            <person name="Rinke M."/>
            <person name="Saiz J.E."/>
            <person name="Sartorello F."/>
            <person name="Scherens B."/>
            <person name="Sen-Gupta M."/>
            <person name="Soler-Mira A."/>
            <person name="Urbanus J.H.M."/>
            <person name="Valle G."/>
            <person name="Van Dyck L."/>
            <person name="Verhasselt P."/>
            <person name="Vierendeels F."/>
            <person name="Vissers S."/>
            <person name="Voet M."/>
            <person name="Volckaert G."/>
            <person name="Wach A."/>
            <person name="Wambutt R."/>
            <person name="Wedler H."/>
            <person name="Zollner A."/>
            <person name="Hani J."/>
        </authorList>
    </citation>
    <scope>NUCLEOTIDE SEQUENCE [LARGE SCALE GENOMIC DNA]</scope>
    <source>
        <strain>ATCC 204508 / S288c</strain>
    </source>
</reference>
<reference key="4">
    <citation type="journal article" date="2014" name="G3 (Bethesda)">
        <title>The reference genome sequence of Saccharomyces cerevisiae: Then and now.</title>
        <authorList>
            <person name="Engel S.R."/>
            <person name="Dietrich F.S."/>
            <person name="Fisk D.G."/>
            <person name="Binkley G."/>
            <person name="Balakrishnan R."/>
            <person name="Costanzo M.C."/>
            <person name="Dwight S.S."/>
            <person name="Hitz B.C."/>
            <person name="Karra K."/>
            <person name="Nash R.S."/>
            <person name="Weng S."/>
            <person name="Wong E.D."/>
            <person name="Lloyd P."/>
            <person name="Skrzypek M.S."/>
            <person name="Miyasato S.R."/>
            <person name="Simison M."/>
            <person name="Cherry J.M."/>
        </authorList>
    </citation>
    <scope>GENOME REANNOTATION</scope>
    <source>
        <strain>ATCC 204508 / S288c</strain>
    </source>
</reference>
<reference key="5">
    <citation type="journal article" date="2002" name="Biochem. Biophys. Res. Commun.">
        <title>Saccharomyces cerevisiae Pra1p/Yip3p interacts with Yip1p and Rab proteins.</title>
        <authorList>
            <person name="Calero M."/>
            <person name="Collins R.N."/>
        </authorList>
    </citation>
    <scope>INTERACTION WITH SEC4; YIP1; YPT1; YPT6; YPT10; YPT11; YPT31; YPT32 AND YPT52</scope>
</reference>
<reference key="6">
    <citation type="journal article" date="2003" name="Nature">
        <title>Global analysis of protein localization in budding yeast.</title>
        <authorList>
            <person name="Huh W.-K."/>
            <person name="Falvo J.V."/>
            <person name="Gerke L.C."/>
            <person name="Carroll A.S."/>
            <person name="Howson R.W."/>
            <person name="Weissman J.S."/>
            <person name="O'Shea E.K."/>
        </authorList>
    </citation>
    <scope>SUBCELLULAR LOCATION [LARGE SCALE ANALYSIS]</scope>
</reference>
<reference key="7">
    <citation type="journal article" date="2003" name="Nature">
        <title>Global analysis of protein expression in yeast.</title>
        <authorList>
            <person name="Ghaemmaghami S."/>
            <person name="Huh W.-K."/>
            <person name="Bower K."/>
            <person name="Howson R.W."/>
            <person name="Belle A."/>
            <person name="Dephoure N."/>
            <person name="O'Shea E.K."/>
            <person name="Weissman J.S."/>
        </authorList>
    </citation>
    <scope>LEVEL OF PROTEIN EXPRESSION [LARGE SCALE ANALYSIS]</scope>
</reference>
<reference key="8">
    <citation type="journal article" date="2008" name="Mol. Cell. Proteomics">
        <title>A multidimensional chromatography technology for in-depth phosphoproteome analysis.</title>
        <authorList>
            <person name="Albuquerque C.P."/>
            <person name="Smolka M.B."/>
            <person name="Payne S.H."/>
            <person name="Bafna V."/>
            <person name="Eng J."/>
            <person name="Zhou H."/>
        </authorList>
    </citation>
    <scope>PHOSPHORYLATION [LARGE SCALE ANALYSIS] AT SER-18</scope>
    <scope>IDENTIFICATION BY MASS SPECTROMETRY [LARGE SCALE ANALYSIS]</scope>
</reference>
<reference key="9">
    <citation type="journal article" date="2012" name="Proc. Natl. Acad. Sci. U.S.A.">
        <title>N-terminal acetylome analyses and functional insights of the N-terminal acetyltransferase NatB.</title>
        <authorList>
            <person name="Van Damme P."/>
            <person name="Lasa M."/>
            <person name="Polevoda B."/>
            <person name="Gazquez C."/>
            <person name="Elosegui-Artola A."/>
            <person name="Kim D.S."/>
            <person name="De Juan-Pardo E."/>
            <person name="Demeyer K."/>
            <person name="Hole K."/>
            <person name="Larrea E."/>
            <person name="Timmerman E."/>
            <person name="Prieto J."/>
            <person name="Arnesen T."/>
            <person name="Sherman F."/>
            <person name="Gevaert K."/>
            <person name="Aldabe R."/>
        </authorList>
    </citation>
    <scope>ACETYLATION [LARGE SCALE ANALYSIS] AT MET-1</scope>
    <scope>IDENTIFICATION BY MASS SPECTROMETRY [LARGE SCALE ANALYSIS]</scope>
</reference>
<reference key="10">
    <citation type="journal article" date="2022" name="Cells">
        <title>Pls1 Is a Peroxisomal Matrix Protein with a Role in Regulating Lysine Biosynthesis.</title>
        <authorList>
            <person name="David Y."/>
            <person name="Castro I.G."/>
            <person name="Yifrach E."/>
            <person name="Bibi C."/>
            <person name="Katawi E."/>
            <person name="Yahav Har-Shai D."/>
            <person name="Brodsky S."/>
            <person name="Barkai N."/>
            <person name="Ravid T."/>
            <person name="Eisenstein M."/>
            <person name="Pietrokovski S."/>
            <person name="Schuldiner M."/>
            <person name="Zalckvar E."/>
        </authorList>
    </citation>
    <scope>SUBCELLULAR LOCATION</scope>
    <scope>ALTERNATIVE SPLICING</scope>
</reference>
<protein>
    <recommendedName>
        <fullName>Prenylated Rab acceptor 1</fullName>
    </recommendedName>
</protein>
<dbReference type="EMBL" id="X97400">
    <property type="protein sequence ID" value="CAA66057.1"/>
    <property type="molecule type" value="Genomic_DNA"/>
</dbReference>
<dbReference type="EMBL" id="X97401">
    <property type="protein sequence ID" value="CAA66058.1"/>
    <property type="molecule type" value="mRNA"/>
</dbReference>
<dbReference type="EMBL" id="X94547">
    <property type="protein sequence ID" value="CAA64238.1"/>
    <property type="status" value="ALT_SEQ"/>
    <property type="molecule type" value="Genomic_DNA"/>
</dbReference>
<dbReference type="EMBL" id="Z71320">
    <property type="protein sequence ID" value="CAA95911.1"/>
    <property type="molecule type" value="Genomic_DNA"/>
</dbReference>
<dbReference type="EMBL" id="Z71321">
    <property type="protein sequence ID" value="CAA95913.1"/>
    <property type="molecule type" value="Genomic_DNA"/>
</dbReference>
<dbReference type="EMBL" id="BK006947">
    <property type="protein sequence ID" value="DAA10501.1"/>
    <property type="molecule type" value="Genomic_DNA"/>
</dbReference>
<dbReference type="PIR" id="S61100">
    <property type="entry name" value="S61100"/>
</dbReference>
<dbReference type="RefSeq" id="NP_014354.2">
    <molecule id="P53633-1"/>
    <property type="nucleotide sequence ID" value="NM_001182883.1"/>
</dbReference>
<dbReference type="SMR" id="P53633"/>
<dbReference type="BioGRID" id="35780">
    <property type="interactions" value="136"/>
</dbReference>
<dbReference type="DIP" id="DIP-2059N"/>
<dbReference type="FunCoup" id="P53633">
    <property type="interactions" value="367"/>
</dbReference>
<dbReference type="IntAct" id="P53633">
    <property type="interactions" value="34"/>
</dbReference>
<dbReference type="MINT" id="P53633"/>
<dbReference type="STRING" id="4932.YNL044W"/>
<dbReference type="TCDB" id="9.A.49.1.12">
    <property type="family name" value="the prenylated rab acceptor protein 1 (pra1) family"/>
</dbReference>
<dbReference type="iPTMnet" id="P53633"/>
<dbReference type="PaxDb" id="4932-YNL044W"/>
<dbReference type="PeptideAtlas" id="P53633"/>
<dbReference type="TopDownProteomics" id="P53633-1"/>
<dbReference type="TopDownProteomics" id="P53633-2"/>
<dbReference type="EnsemblFungi" id="YNL044W_mRNA">
    <molecule id="P53633-1"/>
    <property type="protein sequence ID" value="YNL044W"/>
    <property type="gene ID" value="YNL044W"/>
</dbReference>
<dbReference type="GeneID" id="855683"/>
<dbReference type="KEGG" id="sce:YNL044W"/>
<dbReference type="AGR" id="SGD:S000004989"/>
<dbReference type="SGD" id="S000004989">
    <property type="gene designation" value="YIP3"/>
</dbReference>
<dbReference type="VEuPathDB" id="FungiDB:YNL044W"/>
<dbReference type="eggNOG" id="KOG3142">
    <property type="taxonomic scope" value="Eukaryota"/>
</dbReference>
<dbReference type="GeneTree" id="ENSGT00390000010549"/>
<dbReference type="HOGENOM" id="CLU_103851_1_1_1"/>
<dbReference type="InParanoid" id="P53633"/>
<dbReference type="OMA" id="PWTVFFN"/>
<dbReference type="OrthoDB" id="63113at2759"/>
<dbReference type="BioCyc" id="YEAST:G3O-33079-MONOMER"/>
<dbReference type="BioGRID-ORCS" id="855683">
    <property type="hits" value="0 hits in 10 CRISPR screens"/>
</dbReference>
<dbReference type="ChiTaRS" id="YIP3">
    <property type="organism name" value="yeast"/>
</dbReference>
<dbReference type="PRO" id="PR:P53633"/>
<dbReference type="Proteomes" id="UP000002311">
    <property type="component" value="Chromosome XIV"/>
</dbReference>
<dbReference type="RNAct" id="P53633">
    <property type="molecule type" value="protein"/>
</dbReference>
<dbReference type="GO" id="GO:0030134">
    <property type="term" value="C:COPII-coated ER to Golgi transport vesicle"/>
    <property type="evidence" value="ECO:0000314"/>
    <property type="project" value="SGD"/>
</dbReference>
<dbReference type="GO" id="GO:0005783">
    <property type="term" value="C:endoplasmic reticulum"/>
    <property type="evidence" value="ECO:0000314"/>
    <property type="project" value="SGD"/>
</dbReference>
<dbReference type="GO" id="GO:0005794">
    <property type="term" value="C:Golgi apparatus"/>
    <property type="evidence" value="ECO:0000314"/>
    <property type="project" value="SGD"/>
</dbReference>
<dbReference type="GO" id="GO:0000139">
    <property type="term" value="C:Golgi membrane"/>
    <property type="evidence" value="ECO:0007669"/>
    <property type="project" value="UniProtKB-SubCell"/>
</dbReference>
<dbReference type="GO" id="GO:0016020">
    <property type="term" value="C:membrane"/>
    <property type="evidence" value="ECO:0000255"/>
    <property type="project" value="SGD"/>
</dbReference>
<dbReference type="GO" id="GO:0005778">
    <property type="term" value="C:peroxisomal membrane"/>
    <property type="evidence" value="ECO:0007669"/>
    <property type="project" value="UniProtKB-SubCell"/>
</dbReference>
<dbReference type="GO" id="GO:0005777">
    <property type="term" value="C:peroxisome"/>
    <property type="evidence" value="ECO:0000314"/>
    <property type="project" value="SGD"/>
</dbReference>
<dbReference type="InterPro" id="IPR004895">
    <property type="entry name" value="Prenylated_rab_accept_PRA1"/>
</dbReference>
<dbReference type="PANTHER" id="PTHR19317">
    <property type="entry name" value="PRENYLATED RAB ACCEPTOR 1-RELATED"/>
    <property type="match status" value="1"/>
</dbReference>
<dbReference type="PANTHER" id="PTHR19317:SF0">
    <property type="entry name" value="PRENYLATED RAB ACCEPTOR PROTEIN 1"/>
    <property type="match status" value="1"/>
</dbReference>
<dbReference type="Pfam" id="PF03208">
    <property type="entry name" value="PRA1"/>
    <property type="match status" value="1"/>
</dbReference>
<keyword id="KW-0007">Acetylation</keyword>
<keyword id="KW-0025">Alternative splicing</keyword>
<keyword id="KW-0333">Golgi apparatus</keyword>
<keyword id="KW-0472">Membrane</keyword>
<keyword id="KW-0576">Peroxisome</keyword>
<keyword id="KW-0597">Phosphoprotein</keyword>
<keyword id="KW-1185">Reference proteome</keyword>
<keyword id="KW-0812">Transmembrane</keyword>
<keyword id="KW-1133">Transmembrane helix</keyword>
<evidence type="ECO:0000250" key="1">
    <source>
        <dbReference type="UniProtKB" id="P30952"/>
    </source>
</evidence>
<evidence type="ECO:0000255" key="2"/>
<evidence type="ECO:0000269" key="3">
    <source>
    </source>
</evidence>
<evidence type="ECO:0000269" key="4">
    <source>
    </source>
</evidence>
<evidence type="ECO:0000269" key="5">
    <source>
    </source>
</evidence>
<evidence type="ECO:0000269" key="6">
    <source>
    </source>
</evidence>
<evidence type="ECO:0000305" key="7"/>
<evidence type="ECO:0000305" key="8">
    <source>
    </source>
</evidence>
<evidence type="ECO:0007744" key="9">
    <source>
    </source>
</evidence>
<evidence type="ECO:0007744" key="10">
    <source>
    </source>
</evidence>
<name>PRA1_YEAST</name>
<feature type="chain" id="PRO_0000220887" description="Prenylated Rab acceptor 1">
    <location>
        <begin position="1"/>
        <end position="176"/>
    </location>
</feature>
<feature type="transmembrane region" description="Helical" evidence="2">
    <location>
        <begin position="84"/>
        <end position="104"/>
    </location>
</feature>
<feature type="transmembrane region" description="Helical" evidence="2">
    <location>
        <begin position="129"/>
        <end position="149"/>
    </location>
</feature>
<feature type="modified residue" description="N-acetylmethionine" evidence="10">
    <location>
        <position position="1"/>
    </location>
</feature>
<feature type="modified residue" description="Phosphoserine" evidence="9">
    <location>
        <position position="18"/>
    </location>
</feature>
<feature type="splice variant" id="VSP_061751" description="In isoform 2.">
    <original>QVSRFTQNFSMENIKSEFQSLQSKLATLRTPQEFFNFKKISKPQNFGEVQSRVAYNLKYFSSNYGLIIGCLSIYTLLTNLLLLFVIVLVVAGIVGINKLKGEELVTPFGSFKTNQLYTGLVCVAVPIGFLASPISTLLWLIGASAVSVFGHASLMEKPIETVFDEETV</original>
    <variation>VSSKL</variation>
    <location>
        <begin position="9"/>
        <end position="176"/>
    </location>
</feature>
<feature type="sequence conflict" description="In Ref. 1; CAA66057/CAA66058." evidence="7" ref="1">
    <original>L</original>
    <variation>F</variation>
    <location>
        <position position="29"/>
    </location>
</feature>
<feature type="short sequence motif" description="SKL peroxisome targeting motif" evidence="1">
    <location sequence="P53633-2">
        <begin position="11"/>
        <end position="13"/>
    </location>
</feature>
<sequence>MNQLGALAQVSRFTQNFSMENIKSEFQSLQSKLATLRTPQEFFNFKKISKPQNFGEVQSRVAYNLKYFSSNYGLIIGCLSIYTLLTNLLLLFVIVLVVAGIVGINKLKGEELVTPFGSFKTNQLYTGLVCVAVPIGFLASPISTLLWLIGASAVSVFGHASLMEKPIETVFDEETV</sequence>
<proteinExistence type="evidence at protein level"/>
<accession>P53633</accession>
<accession>D6W1D5</accession>
<gene>
    <name type="primary">YIP3</name>
    <name type="synonym">PRA1</name>
    <name type="ordered locus">YNL044W</name>
    <name type="ORF">N2650</name>
</gene>
<organism>
    <name type="scientific">Saccharomyces cerevisiae (strain ATCC 204508 / S288c)</name>
    <name type="common">Baker's yeast</name>
    <dbReference type="NCBI Taxonomy" id="559292"/>
    <lineage>
        <taxon>Eukaryota</taxon>
        <taxon>Fungi</taxon>
        <taxon>Dikarya</taxon>
        <taxon>Ascomycota</taxon>
        <taxon>Saccharomycotina</taxon>
        <taxon>Saccharomycetes</taxon>
        <taxon>Saccharomycetales</taxon>
        <taxon>Saccharomycetaceae</taxon>
        <taxon>Saccharomyces</taxon>
    </lineage>
</organism>